<gene>
    <name evidence="1" type="primary">rpoA</name>
    <name type="ordered locus">Syncc9605_0353</name>
</gene>
<accession>Q3AMQ3</accession>
<comment type="function">
    <text evidence="1">DNA-dependent RNA polymerase catalyzes the transcription of DNA into RNA using the four ribonucleoside triphosphates as substrates.</text>
</comment>
<comment type="catalytic activity">
    <reaction evidence="1">
        <text>RNA(n) + a ribonucleoside 5'-triphosphate = RNA(n+1) + diphosphate</text>
        <dbReference type="Rhea" id="RHEA:21248"/>
        <dbReference type="Rhea" id="RHEA-COMP:14527"/>
        <dbReference type="Rhea" id="RHEA-COMP:17342"/>
        <dbReference type="ChEBI" id="CHEBI:33019"/>
        <dbReference type="ChEBI" id="CHEBI:61557"/>
        <dbReference type="ChEBI" id="CHEBI:140395"/>
        <dbReference type="EC" id="2.7.7.6"/>
    </reaction>
</comment>
<comment type="subunit">
    <text evidence="1">In cyanobacteria the RNAP catalytic core is composed of 2 alpha, 1 beta, 1 beta', 1 gamma and 1 omega subunit. When a sigma factor is associated with the core the holoenzyme is formed, which can initiate transcription.</text>
</comment>
<comment type="domain">
    <text evidence="1">The N-terminal domain is essential for RNAP assembly and basal transcription, whereas the C-terminal domain is involved in interaction with transcriptional regulators and with upstream promoter elements.</text>
</comment>
<comment type="similarity">
    <text evidence="1">Belongs to the RNA polymerase alpha chain family.</text>
</comment>
<dbReference type="EC" id="2.7.7.6" evidence="1"/>
<dbReference type="EMBL" id="CP000110">
    <property type="protein sequence ID" value="ABB34129.1"/>
    <property type="molecule type" value="Genomic_DNA"/>
</dbReference>
<dbReference type="RefSeq" id="WP_011363374.1">
    <property type="nucleotide sequence ID" value="NC_007516.1"/>
</dbReference>
<dbReference type="SMR" id="Q3AMQ3"/>
<dbReference type="STRING" id="110662.Syncc9605_0353"/>
<dbReference type="KEGG" id="syd:Syncc9605_0353"/>
<dbReference type="eggNOG" id="COG0202">
    <property type="taxonomic scope" value="Bacteria"/>
</dbReference>
<dbReference type="HOGENOM" id="CLU_053084_0_1_3"/>
<dbReference type="OrthoDB" id="9805706at2"/>
<dbReference type="GO" id="GO:0005737">
    <property type="term" value="C:cytoplasm"/>
    <property type="evidence" value="ECO:0007669"/>
    <property type="project" value="UniProtKB-ARBA"/>
</dbReference>
<dbReference type="GO" id="GO:0000428">
    <property type="term" value="C:DNA-directed RNA polymerase complex"/>
    <property type="evidence" value="ECO:0007669"/>
    <property type="project" value="UniProtKB-KW"/>
</dbReference>
<dbReference type="GO" id="GO:0003677">
    <property type="term" value="F:DNA binding"/>
    <property type="evidence" value="ECO:0007669"/>
    <property type="project" value="UniProtKB-UniRule"/>
</dbReference>
<dbReference type="GO" id="GO:0003899">
    <property type="term" value="F:DNA-directed RNA polymerase activity"/>
    <property type="evidence" value="ECO:0007669"/>
    <property type="project" value="UniProtKB-UniRule"/>
</dbReference>
<dbReference type="GO" id="GO:0046983">
    <property type="term" value="F:protein dimerization activity"/>
    <property type="evidence" value="ECO:0007669"/>
    <property type="project" value="InterPro"/>
</dbReference>
<dbReference type="GO" id="GO:0006351">
    <property type="term" value="P:DNA-templated transcription"/>
    <property type="evidence" value="ECO:0007669"/>
    <property type="project" value="UniProtKB-UniRule"/>
</dbReference>
<dbReference type="CDD" id="cd06928">
    <property type="entry name" value="RNAP_alpha_NTD"/>
    <property type="match status" value="1"/>
</dbReference>
<dbReference type="FunFam" id="2.170.120.12:FF:000001">
    <property type="entry name" value="DNA-directed RNA polymerase subunit alpha"/>
    <property type="match status" value="1"/>
</dbReference>
<dbReference type="Gene3D" id="1.10.150.20">
    <property type="entry name" value="5' to 3' exonuclease, C-terminal subdomain"/>
    <property type="match status" value="1"/>
</dbReference>
<dbReference type="Gene3D" id="2.170.120.12">
    <property type="entry name" value="DNA-directed RNA polymerase, insert domain"/>
    <property type="match status" value="1"/>
</dbReference>
<dbReference type="Gene3D" id="3.30.1360.10">
    <property type="entry name" value="RNA polymerase, RBP11-like subunit"/>
    <property type="match status" value="1"/>
</dbReference>
<dbReference type="HAMAP" id="MF_00059">
    <property type="entry name" value="RNApol_bact_RpoA"/>
    <property type="match status" value="1"/>
</dbReference>
<dbReference type="InterPro" id="IPR011262">
    <property type="entry name" value="DNA-dir_RNA_pol_insert"/>
</dbReference>
<dbReference type="InterPro" id="IPR011263">
    <property type="entry name" value="DNA-dir_RNA_pol_RpoA/D/Rpb3"/>
</dbReference>
<dbReference type="InterPro" id="IPR011773">
    <property type="entry name" value="DNA-dir_RpoA"/>
</dbReference>
<dbReference type="InterPro" id="IPR036603">
    <property type="entry name" value="RBP11-like"/>
</dbReference>
<dbReference type="InterPro" id="IPR011260">
    <property type="entry name" value="RNAP_asu_C"/>
</dbReference>
<dbReference type="InterPro" id="IPR036643">
    <property type="entry name" value="RNApol_insert_sf"/>
</dbReference>
<dbReference type="NCBIfam" id="NF003516">
    <property type="entry name" value="PRK05182.2-2"/>
    <property type="match status" value="1"/>
</dbReference>
<dbReference type="NCBIfam" id="NF003519">
    <property type="entry name" value="PRK05182.2-5"/>
    <property type="match status" value="1"/>
</dbReference>
<dbReference type="NCBIfam" id="TIGR02027">
    <property type="entry name" value="rpoA"/>
    <property type="match status" value="1"/>
</dbReference>
<dbReference type="Pfam" id="PF01000">
    <property type="entry name" value="RNA_pol_A_bac"/>
    <property type="match status" value="1"/>
</dbReference>
<dbReference type="Pfam" id="PF03118">
    <property type="entry name" value="RNA_pol_A_CTD"/>
    <property type="match status" value="1"/>
</dbReference>
<dbReference type="Pfam" id="PF01193">
    <property type="entry name" value="RNA_pol_L"/>
    <property type="match status" value="1"/>
</dbReference>
<dbReference type="SMART" id="SM00662">
    <property type="entry name" value="RPOLD"/>
    <property type="match status" value="1"/>
</dbReference>
<dbReference type="SUPFAM" id="SSF47789">
    <property type="entry name" value="C-terminal domain of RNA polymerase alpha subunit"/>
    <property type="match status" value="1"/>
</dbReference>
<dbReference type="SUPFAM" id="SSF56553">
    <property type="entry name" value="Insert subdomain of RNA polymerase alpha subunit"/>
    <property type="match status" value="1"/>
</dbReference>
<dbReference type="SUPFAM" id="SSF55257">
    <property type="entry name" value="RBP11-like subunits of RNA polymerase"/>
    <property type="match status" value="1"/>
</dbReference>
<protein>
    <recommendedName>
        <fullName evidence="1">DNA-directed RNA polymerase subunit alpha</fullName>
        <shortName evidence="1">RNAP subunit alpha</shortName>
        <ecNumber evidence="1">2.7.7.6</ecNumber>
    </recommendedName>
    <alternativeName>
        <fullName evidence="1">RNA polymerase subunit alpha</fullName>
    </alternativeName>
    <alternativeName>
        <fullName evidence="1">Transcriptase subunit alpha</fullName>
    </alternativeName>
</protein>
<keyword id="KW-0240">DNA-directed RNA polymerase</keyword>
<keyword id="KW-0548">Nucleotidyltransferase</keyword>
<keyword id="KW-0804">Transcription</keyword>
<keyword id="KW-0808">Transferase</keyword>
<organism>
    <name type="scientific">Synechococcus sp. (strain CC9605)</name>
    <dbReference type="NCBI Taxonomy" id="110662"/>
    <lineage>
        <taxon>Bacteria</taxon>
        <taxon>Bacillati</taxon>
        <taxon>Cyanobacteriota</taxon>
        <taxon>Cyanophyceae</taxon>
        <taxon>Synechococcales</taxon>
        <taxon>Synechococcaceae</taxon>
        <taxon>Synechococcus</taxon>
    </lineage>
</organism>
<proteinExistence type="inferred from homology"/>
<evidence type="ECO:0000255" key="1">
    <source>
        <dbReference type="HAMAP-Rule" id="MF_00059"/>
    </source>
</evidence>
<reference key="1">
    <citation type="submission" date="2005-07" db="EMBL/GenBank/DDBJ databases">
        <title>Complete sequence of Synechococcus sp. CC9605.</title>
        <authorList>
            <consortium name="US DOE Joint Genome Institute"/>
            <person name="Copeland A."/>
            <person name="Lucas S."/>
            <person name="Lapidus A."/>
            <person name="Barry K."/>
            <person name="Detter J.C."/>
            <person name="Glavina T."/>
            <person name="Hammon N."/>
            <person name="Israni S."/>
            <person name="Pitluck S."/>
            <person name="Schmutz J."/>
            <person name="Martinez M."/>
            <person name="Larimer F."/>
            <person name="Land M."/>
            <person name="Kyrpides N."/>
            <person name="Ivanova N."/>
            <person name="Richardson P."/>
        </authorList>
    </citation>
    <scope>NUCLEOTIDE SEQUENCE [LARGE SCALE GENOMIC DNA]</scope>
    <source>
        <strain>CC9605</strain>
    </source>
</reference>
<sequence>MLQYQIDRIEHQVADDRAQSGVFLIGPLERGQATTLGNALRRVLMGGLEGSAVTAIRIAGVNHEYATVPGVREDVLDILLNCKELTVNSRSAELEIGRLVVAGPAEVKAGDLQFSSQVQVVDTDRPIATVADGHSLELELHVERGVGYRPVDRHNEETSAIDLLQIDAVFMPVTRVNFTIDETAVAEGGSARERLRMEIVTDGSITPDEALAQSANQLIELFQPLATVTLVEEVPAEPEPSAEAQIPLEELNLSVRAYNCLKRAQVNSVSDLMGFSYEDLLEIKNFGSKSADEVIEALERIGISIPQSRTSA</sequence>
<feature type="chain" id="PRO_0000264558" description="DNA-directed RNA polymerase subunit alpha">
    <location>
        <begin position="1"/>
        <end position="312"/>
    </location>
</feature>
<feature type="region of interest" description="Alpha N-terminal domain (alpha-NTD)" evidence="1">
    <location>
        <begin position="1"/>
        <end position="229"/>
    </location>
</feature>
<feature type="region of interest" description="Alpha C-terminal domain (alpha-CTD)" evidence="1">
    <location>
        <begin position="239"/>
        <end position="312"/>
    </location>
</feature>
<name>RPOA_SYNSC</name>